<sequence length="141" mass="15427">MAIERTISIIKPDAVGKNVIGKIYSRFEENGLKIVAAKMKQLTLKEAQEFYAVHKDRPFYAGLVEFMTGGPVMIQVLEGENAVLKNRELMGATNPSEAAEGTIRADFATSVSINAVHGSDSVENAALEIAYFFSQTEICPR</sequence>
<feature type="chain" id="PRO_0000137012" description="Nucleoside diphosphate kinase">
    <location>
        <begin position="1"/>
        <end position="141"/>
    </location>
</feature>
<feature type="active site" description="Pros-phosphohistidine intermediate" evidence="1">
    <location>
        <position position="117"/>
    </location>
</feature>
<feature type="binding site" evidence="1">
    <location>
        <position position="11"/>
    </location>
    <ligand>
        <name>ATP</name>
        <dbReference type="ChEBI" id="CHEBI:30616"/>
    </ligand>
</feature>
<feature type="binding site" evidence="1">
    <location>
        <position position="59"/>
    </location>
    <ligand>
        <name>ATP</name>
        <dbReference type="ChEBI" id="CHEBI:30616"/>
    </ligand>
</feature>
<feature type="binding site" evidence="1">
    <location>
        <position position="87"/>
    </location>
    <ligand>
        <name>ATP</name>
        <dbReference type="ChEBI" id="CHEBI:30616"/>
    </ligand>
</feature>
<feature type="binding site" evidence="1">
    <location>
        <position position="93"/>
    </location>
    <ligand>
        <name>ATP</name>
        <dbReference type="ChEBI" id="CHEBI:30616"/>
    </ligand>
</feature>
<feature type="binding site" evidence="1">
    <location>
        <position position="104"/>
    </location>
    <ligand>
        <name>ATP</name>
        <dbReference type="ChEBI" id="CHEBI:30616"/>
    </ligand>
</feature>
<feature type="binding site" evidence="1">
    <location>
        <position position="114"/>
    </location>
    <ligand>
        <name>ATP</name>
        <dbReference type="ChEBI" id="CHEBI:30616"/>
    </ligand>
</feature>
<name>NDK_NEIMA</name>
<dbReference type="EC" id="2.7.4.6" evidence="1"/>
<dbReference type="EMBL" id="AL157959">
    <property type="protein sequence ID" value="CAM08668.1"/>
    <property type="molecule type" value="Genomic_DNA"/>
</dbReference>
<dbReference type="RefSeq" id="WP_002213338.1">
    <property type="nucleotide sequence ID" value="NC_003116.1"/>
</dbReference>
<dbReference type="SMR" id="P65532"/>
<dbReference type="EnsemblBacteria" id="CAM08668">
    <property type="protein sequence ID" value="CAM08668"/>
    <property type="gene ID" value="NMA1521"/>
</dbReference>
<dbReference type="GeneID" id="93385892"/>
<dbReference type="KEGG" id="nma:NMA1521"/>
<dbReference type="HOGENOM" id="CLU_060216_8_1_4"/>
<dbReference type="Proteomes" id="UP000000626">
    <property type="component" value="Chromosome"/>
</dbReference>
<dbReference type="GO" id="GO:0005737">
    <property type="term" value="C:cytoplasm"/>
    <property type="evidence" value="ECO:0007669"/>
    <property type="project" value="UniProtKB-SubCell"/>
</dbReference>
<dbReference type="GO" id="GO:0005524">
    <property type="term" value="F:ATP binding"/>
    <property type="evidence" value="ECO:0007669"/>
    <property type="project" value="UniProtKB-UniRule"/>
</dbReference>
<dbReference type="GO" id="GO:0046872">
    <property type="term" value="F:metal ion binding"/>
    <property type="evidence" value="ECO:0007669"/>
    <property type="project" value="UniProtKB-KW"/>
</dbReference>
<dbReference type="GO" id="GO:0004550">
    <property type="term" value="F:nucleoside diphosphate kinase activity"/>
    <property type="evidence" value="ECO:0007669"/>
    <property type="project" value="UniProtKB-UniRule"/>
</dbReference>
<dbReference type="GO" id="GO:0006241">
    <property type="term" value="P:CTP biosynthetic process"/>
    <property type="evidence" value="ECO:0007669"/>
    <property type="project" value="UniProtKB-UniRule"/>
</dbReference>
<dbReference type="GO" id="GO:0006183">
    <property type="term" value="P:GTP biosynthetic process"/>
    <property type="evidence" value="ECO:0007669"/>
    <property type="project" value="UniProtKB-UniRule"/>
</dbReference>
<dbReference type="GO" id="GO:0006228">
    <property type="term" value="P:UTP biosynthetic process"/>
    <property type="evidence" value="ECO:0007669"/>
    <property type="project" value="UniProtKB-UniRule"/>
</dbReference>
<dbReference type="CDD" id="cd04413">
    <property type="entry name" value="NDPk_I"/>
    <property type="match status" value="1"/>
</dbReference>
<dbReference type="FunFam" id="3.30.70.141:FF:000001">
    <property type="entry name" value="Nucleoside diphosphate kinase"/>
    <property type="match status" value="1"/>
</dbReference>
<dbReference type="Gene3D" id="3.30.70.141">
    <property type="entry name" value="Nucleoside diphosphate kinase-like domain"/>
    <property type="match status" value="1"/>
</dbReference>
<dbReference type="HAMAP" id="MF_00451">
    <property type="entry name" value="NDP_kinase"/>
    <property type="match status" value="1"/>
</dbReference>
<dbReference type="InterPro" id="IPR034907">
    <property type="entry name" value="NDK-like_dom"/>
</dbReference>
<dbReference type="InterPro" id="IPR036850">
    <property type="entry name" value="NDK-like_dom_sf"/>
</dbReference>
<dbReference type="InterPro" id="IPR001564">
    <property type="entry name" value="Nucleoside_diP_kinase"/>
</dbReference>
<dbReference type="InterPro" id="IPR023005">
    <property type="entry name" value="Nucleoside_diP_kinase_AS"/>
</dbReference>
<dbReference type="NCBIfam" id="NF001908">
    <property type="entry name" value="PRK00668.1"/>
    <property type="match status" value="1"/>
</dbReference>
<dbReference type="PANTHER" id="PTHR11349">
    <property type="entry name" value="NUCLEOSIDE DIPHOSPHATE KINASE"/>
    <property type="match status" value="1"/>
</dbReference>
<dbReference type="Pfam" id="PF00334">
    <property type="entry name" value="NDK"/>
    <property type="match status" value="1"/>
</dbReference>
<dbReference type="PRINTS" id="PR01243">
    <property type="entry name" value="NUCDPKINASE"/>
</dbReference>
<dbReference type="SMART" id="SM00562">
    <property type="entry name" value="NDK"/>
    <property type="match status" value="1"/>
</dbReference>
<dbReference type="SUPFAM" id="SSF54919">
    <property type="entry name" value="Nucleoside diphosphate kinase, NDK"/>
    <property type="match status" value="1"/>
</dbReference>
<dbReference type="PROSITE" id="PS00469">
    <property type="entry name" value="NDPK"/>
    <property type="match status" value="1"/>
</dbReference>
<dbReference type="PROSITE" id="PS51374">
    <property type="entry name" value="NDPK_LIKE"/>
    <property type="match status" value="1"/>
</dbReference>
<comment type="function">
    <text evidence="1">Major role in the synthesis of nucleoside triphosphates other than ATP. The ATP gamma phosphate is transferred to the NDP beta phosphate via a ping-pong mechanism, using a phosphorylated active-site intermediate.</text>
</comment>
<comment type="catalytic activity">
    <reaction evidence="1">
        <text>a 2'-deoxyribonucleoside 5'-diphosphate + ATP = a 2'-deoxyribonucleoside 5'-triphosphate + ADP</text>
        <dbReference type="Rhea" id="RHEA:44640"/>
        <dbReference type="ChEBI" id="CHEBI:30616"/>
        <dbReference type="ChEBI" id="CHEBI:61560"/>
        <dbReference type="ChEBI" id="CHEBI:73316"/>
        <dbReference type="ChEBI" id="CHEBI:456216"/>
        <dbReference type="EC" id="2.7.4.6"/>
    </reaction>
</comment>
<comment type="catalytic activity">
    <reaction evidence="1">
        <text>a ribonucleoside 5'-diphosphate + ATP = a ribonucleoside 5'-triphosphate + ADP</text>
        <dbReference type="Rhea" id="RHEA:18113"/>
        <dbReference type="ChEBI" id="CHEBI:30616"/>
        <dbReference type="ChEBI" id="CHEBI:57930"/>
        <dbReference type="ChEBI" id="CHEBI:61557"/>
        <dbReference type="ChEBI" id="CHEBI:456216"/>
        <dbReference type="EC" id="2.7.4.6"/>
    </reaction>
</comment>
<comment type="cofactor">
    <cofactor evidence="1">
        <name>Mg(2+)</name>
        <dbReference type="ChEBI" id="CHEBI:18420"/>
    </cofactor>
</comment>
<comment type="subunit">
    <text evidence="1">Homotetramer.</text>
</comment>
<comment type="subcellular location">
    <subcellularLocation>
        <location evidence="1">Cytoplasm</location>
    </subcellularLocation>
</comment>
<comment type="similarity">
    <text evidence="1">Belongs to the NDK family.</text>
</comment>
<protein>
    <recommendedName>
        <fullName evidence="1">Nucleoside diphosphate kinase</fullName>
        <shortName evidence="1">NDK</shortName>
        <shortName evidence="1">NDP kinase</shortName>
        <ecNumber evidence="1">2.7.4.6</ecNumber>
    </recommendedName>
    <alternativeName>
        <fullName evidence="1">Nucleoside-2-P kinase</fullName>
    </alternativeName>
</protein>
<evidence type="ECO:0000255" key="1">
    <source>
        <dbReference type="HAMAP-Rule" id="MF_00451"/>
    </source>
</evidence>
<proteinExistence type="inferred from homology"/>
<keyword id="KW-0067">ATP-binding</keyword>
<keyword id="KW-0963">Cytoplasm</keyword>
<keyword id="KW-0418">Kinase</keyword>
<keyword id="KW-0460">Magnesium</keyword>
<keyword id="KW-0479">Metal-binding</keyword>
<keyword id="KW-0546">Nucleotide metabolism</keyword>
<keyword id="KW-0547">Nucleotide-binding</keyword>
<keyword id="KW-0597">Phosphoprotein</keyword>
<keyword id="KW-0808">Transferase</keyword>
<organism>
    <name type="scientific">Neisseria meningitidis serogroup A / serotype 4A (strain DSM 15465 / Z2491)</name>
    <dbReference type="NCBI Taxonomy" id="122587"/>
    <lineage>
        <taxon>Bacteria</taxon>
        <taxon>Pseudomonadati</taxon>
        <taxon>Pseudomonadota</taxon>
        <taxon>Betaproteobacteria</taxon>
        <taxon>Neisseriales</taxon>
        <taxon>Neisseriaceae</taxon>
        <taxon>Neisseria</taxon>
    </lineage>
</organism>
<accession>P65532</accession>
<accession>A1ISB2</accession>
<accession>Q9JQU6</accession>
<gene>
    <name evidence="1" type="primary">ndk</name>
    <name type="ordered locus">NMA1521</name>
</gene>
<reference key="1">
    <citation type="journal article" date="2000" name="Nature">
        <title>Complete DNA sequence of a serogroup A strain of Neisseria meningitidis Z2491.</title>
        <authorList>
            <person name="Parkhill J."/>
            <person name="Achtman M."/>
            <person name="James K.D."/>
            <person name="Bentley S.D."/>
            <person name="Churcher C.M."/>
            <person name="Klee S.R."/>
            <person name="Morelli G."/>
            <person name="Basham D."/>
            <person name="Brown D."/>
            <person name="Chillingworth T."/>
            <person name="Davies R.M."/>
            <person name="Davis P."/>
            <person name="Devlin K."/>
            <person name="Feltwell T."/>
            <person name="Hamlin N."/>
            <person name="Holroyd S."/>
            <person name="Jagels K."/>
            <person name="Leather S."/>
            <person name="Moule S."/>
            <person name="Mungall K.L."/>
            <person name="Quail M.A."/>
            <person name="Rajandream M.A."/>
            <person name="Rutherford K.M."/>
            <person name="Simmonds M."/>
            <person name="Skelton J."/>
            <person name="Whitehead S."/>
            <person name="Spratt B.G."/>
            <person name="Barrell B.G."/>
        </authorList>
    </citation>
    <scope>NUCLEOTIDE SEQUENCE [LARGE SCALE GENOMIC DNA]</scope>
    <source>
        <strain>DSM 15465 / Z2491</strain>
    </source>
</reference>